<gene>
    <name evidence="13" type="primary">BNIP3</name>
    <name type="synonym">NIP3</name>
</gene>
<evidence type="ECO:0000250" key="1">
    <source>
        <dbReference type="UniProtKB" id="O55003"/>
    </source>
</evidence>
<evidence type="ECO:0000255" key="2"/>
<evidence type="ECO:0000256" key="3">
    <source>
        <dbReference type="SAM" id="MobiDB-lite"/>
    </source>
</evidence>
<evidence type="ECO:0000269" key="4">
    <source>
    </source>
</evidence>
<evidence type="ECO:0000269" key="5">
    <source>
    </source>
</evidence>
<evidence type="ECO:0000269" key="6">
    <source>
    </source>
</evidence>
<evidence type="ECO:0000269" key="7">
    <source>
    </source>
</evidence>
<evidence type="ECO:0000269" key="8">
    <source>
    </source>
</evidence>
<evidence type="ECO:0000269" key="9">
    <source>
    </source>
</evidence>
<evidence type="ECO:0000269" key="10">
    <source>
    </source>
</evidence>
<evidence type="ECO:0000269" key="11">
    <source>
    </source>
</evidence>
<evidence type="ECO:0000305" key="12"/>
<evidence type="ECO:0000312" key="13">
    <source>
        <dbReference type="HGNC" id="HGNC:1084"/>
    </source>
</evidence>
<evidence type="ECO:0007744" key="14">
    <source>
    </source>
</evidence>
<evidence type="ECO:0007744" key="15">
    <source>
    </source>
</evidence>
<evidence type="ECO:0007829" key="16">
    <source>
        <dbReference type="PDB" id="2J5D"/>
    </source>
</evidence>
<feature type="chain" id="PRO_0000064964" description="BCL2/adenovirus E1B 19 kDa protein-interacting protein 3">
    <location>
        <begin position="1"/>
        <end position="194"/>
    </location>
</feature>
<feature type="transmembrane region" description="Helical" evidence="2">
    <location>
        <begin position="164"/>
        <end position="184"/>
    </location>
</feature>
<feature type="region of interest" description="Disordered" evidence="3">
    <location>
        <begin position="1"/>
        <end position="102"/>
    </location>
</feature>
<feature type="short sequence motif" description="BH3">
    <location>
        <begin position="100"/>
        <end position="125"/>
    </location>
</feature>
<feature type="compositionally biased region" description="Basic and acidic residues" evidence="3">
    <location>
        <begin position="42"/>
        <end position="55"/>
    </location>
</feature>
<feature type="compositionally biased region" description="Low complexity" evidence="3">
    <location>
        <begin position="56"/>
        <end position="69"/>
    </location>
</feature>
<feature type="compositionally biased region" description="Basic and acidic residues" evidence="3">
    <location>
        <begin position="78"/>
        <end position="88"/>
    </location>
</feature>
<feature type="modified residue" description="Phosphoserine" evidence="15">
    <location>
        <position position="54"/>
    </location>
</feature>
<feature type="modified residue" description="Phosphoserine" evidence="15">
    <location>
        <position position="66"/>
    </location>
</feature>
<feature type="modified residue" description="Phosphoserine" evidence="14">
    <location>
        <position position="86"/>
    </location>
</feature>
<feature type="modified residue" description="Phosphoserine" evidence="1">
    <location>
        <position position="92"/>
    </location>
</feature>
<feature type="modified residue" description="Phosphoserine" evidence="15">
    <location>
        <position position="95"/>
    </location>
</feature>
<feature type="sequence conflict" description="In Ref. 1; AAC00022." evidence="12" ref="1">
    <original>Q</original>
    <variation>E</variation>
    <location>
        <position position="3"/>
    </location>
</feature>
<feature type="helix" evidence="16">
    <location>
        <begin position="159"/>
        <end position="188"/>
    </location>
</feature>
<dbReference type="EMBL" id="U15174">
    <property type="protein sequence ID" value="AAC00022.1"/>
    <property type="molecule type" value="mRNA"/>
</dbReference>
<dbReference type="EMBL" id="AF002697">
    <property type="protein sequence ID" value="AAC16738.1"/>
    <property type="molecule type" value="mRNA"/>
</dbReference>
<dbReference type="EMBL" id="AY886764">
    <property type="protein sequence ID" value="AAW62256.1"/>
    <property type="molecule type" value="Genomic_DNA"/>
</dbReference>
<dbReference type="EMBL" id="AL162274">
    <property type="status" value="NOT_ANNOTATED_CDS"/>
    <property type="molecule type" value="Genomic_DNA"/>
</dbReference>
<dbReference type="EMBL" id="BC009342">
    <property type="status" value="NOT_ANNOTATED_CDS"/>
    <property type="molecule type" value="mRNA"/>
</dbReference>
<dbReference type="EMBL" id="BC021989">
    <property type="protein sequence ID" value="AAH21989.1"/>
    <property type="molecule type" value="mRNA"/>
</dbReference>
<dbReference type="CCDS" id="CCDS7663.3"/>
<dbReference type="PIR" id="I38865">
    <property type="entry name" value="I38865"/>
</dbReference>
<dbReference type="RefSeq" id="NP_004043.3">
    <property type="nucleotide sequence ID" value="NM_004052.3"/>
</dbReference>
<dbReference type="PDB" id="2J5D">
    <property type="method" value="NMR"/>
    <property type="chains" value="A/B=146-190"/>
</dbReference>
<dbReference type="PDB" id="2KA1">
    <property type="method" value="NMR"/>
    <property type="chains" value="A/B=154-188"/>
</dbReference>
<dbReference type="PDB" id="2KA2">
    <property type="method" value="NMR"/>
    <property type="chains" value="A/B=154-188"/>
</dbReference>
<dbReference type="PDBsum" id="2J5D"/>
<dbReference type="PDBsum" id="2KA1"/>
<dbReference type="PDBsum" id="2KA2"/>
<dbReference type="BMRB" id="Q12983"/>
<dbReference type="SMR" id="Q12983"/>
<dbReference type="BioGRID" id="107132">
    <property type="interactions" value="104"/>
</dbReference>
<dbReference type="DIP" id="DIP-34429N"/>
<dbReference type="FunCoup" id="Q12983">
    <property type="interactions" value="1160"/>
</dbReference>
<dbReference type="IntAct" id="Q12983">
    <property type="interactions" value="73"/>
</dbReference>
<dbReference type="MINT" id="Q12983"/>
<dbReference type="STRING" id="9606.ENSP00000357625"/>
<dbReference type="TCDB" id="1.A.20.1.1">
    <property type="family name" value="the bcl2/adenovirus e1b-interacting protein 3 (bnip3) family"/>
</dbReference>
<dbReference type="iPTMnet" id="Q12983"/>
<dbReference type="PhosphoSitePlus" id="Q12983"/>
<dbReference type="BioMuta" id="BNIP3"/>
<dbReference type="DMDM" id="20532402"/>
<dbReference type="jPOST" id="Q12983"/>
<dbReference type="MassIVE" id="Q12983"/>
<dbReference type="PaxDb" id="9606-ENSP00000357625"/>
<dbReference type="PeptideAtlas" id="Q12983"/>
<dbReference type="ProteomicsDB" id="59081"/>
<dbReference type="Pumba" id="Q12983"/>
<dbReference type="Antibodypedia" id="31">
    <property type="antibodies" value="584 antibodies from 36 providers"/>
</dbReference>
<dbReference type="DNASU" id="664"/>
<dbReference type="Ensembl" id="ENST00000368636.9">
    <property type="protein sequence ID" value="ENSP00000357625.6"/>
    <property type="gene ID" value="ENSG00000176171.12"/>
</dbReference>
<dbReference type="GeneID" id="664"/>
<dbReference type="KEGG" id="hsa:664"/>
<dbReference type="MANE-Select" id="ENST00000368636.9">
    <property type="protein sequence ID" value="ENSP00000357625.6"/>
    <property type="RefSeq nucleotide sequence ID" value="NM_004052.4"/>
    <property type="RefSeq protein sequence ID" value="NP_004043.4"/>
</dbReference>
<dbReference type="UCSC" id="uc001lkv.2">
    <property type="organism name" value="human"/>
</dbReference>
<dbReference type="AGR" id="HGNC:1084"/>
<dbReference type="CTD" id="664"/>
<dbReference type="DisGeNET" id="664"/>
<dbReference type="GeneCards" id="BNIP3"/>
<dbReference type="HGNC" id="HGNC:1084">
    <property type="gene designation" value="BNIP3"/>
</dbReference>
<dbReference type="HPA" id="ENSG00000176171">
    <property type="expression patterns" value="Tissue enhanced (pancreas)"/>
</dbReference>
<dbReference type="MIM" id="603293">
    <property type="type" value="gene"/>
</dbReference>
<dbReference type="neXtProt" id="NX_Q12983"/>
<dbReference type="OpenTargets" id="ENSG00000176171"/>
<dbReference type="PharmGKB" id="PA25394"/>
<dbReference type="VEuPathDB" id="HostDB:ENSG00000176171"/>
<dbReference type="eggNOG" id="ENOG502QQ4B">
    <property type="taxonomic scope" value="Eukaryota"/>
</dbReference>
<dbReference type="GeneTree" id="ENSGT00390000013415"/>
<dbReference type="InParanoid" id="Q12983"/>
<dbReference type="OrthoDB" id="9534249at2759"/>
<dbReference type="PAN-GO" id="Q12983">
    <property type="GO annotations" value="6 GO annotations based on evolutionary models"/>
</dbReference>
<dbReference type="PhylomeDB" id="Q12983"/>
<dbReference type="TreeFam" id="TF315424"/>
<dbReference type="PathwayCommons" id="Q12983"/>
<dbReference type="SignaLink" id="Q12983"/>
<dbReference type="SIGNOR" id="Q12983"/>
<dbReference type="BioGRID-ORCS" id="664">
    <property type="hits" value="128 hits in 1154 CRISPR screens"/>
</dbReference>
<dbReference type="ChiTaRS" id="BNIP3">
    <property type="organism name" value="human"/>
</dbReference>
<dbReference type="EvolutionaryTrace" id="Q12983"/>
<dbReference type="GeneWiki" id="BNIP3"/>
<dbReference type="GenomeRNAi" id="664"/>
<dbReference type="Pharos" id="Q12983">
    <property type="development level" value="Tbio"/>
</dbReference>
<dbReference type="PRO" id="PR:Q12983"/>
<dbReference type="Proteomes" id="UP000005640">
    <property type="component" value="Chromosome 10"/>
</dbReference>
<dbReference type="RNAct" id="Q12983">
    <property type="molecule type" value="protein"/>
</dbReference>
<dbReference type="Bgee" id="ENSG00000176171">
    <property type="expression patterns" value="Expressed in endothelial cell and 210 other cell types or tissues"/>
</dbReference>
<dbReference type="ExpressionAtlas" id="Q12983">
    <property type="expression patterns" value="baseline and differential"/>
</dbReference>
<dbReference type="GO" id="GO:0005737">
    <property type="term" value="C:cytoplasm"/>
    <property type="evidence" value="ECO:0000250"/>
    <property type="project" value="UniProtKB"/>
</dbReference>
<dbReference type="GO" id="GO:0030425">
    <property type="term" value="C:dendrite"/>
    <property type="evidence" value="ECO:0000250"/>
    <property type="project" value="UniProtKB"/>
</dbReference>
<dbReference type="GO" id="GO:0005783">
    <property type="term" value="C:endoplasmic reticulum"/>
    <property type="evidence" value="ECO:0000318"/>
    <property type="project" value="GO_Central"/>
</dbReference>
<dbReference type="GO" id="GO:0005789">
    <property type="term" value="C:endoplasmic reticulum membrane"/>
    <property type="evidence" value="ECO:0000314"/>
    <property type="project" value="FlyBase"/>
</dbReference>
<dbReference type="GO" id="GO:0031966">
    <property type="term" value="C:mitochondrial membrane"/>
    <property type="evidence" value="ECO:0000314"/>
    <property type="project" value="UniProtKB"/>
</dbReference>
<dbReference type="GO" id="GO:0005741">
    <property type="term" value="C:mitochondrial outer membrane"/>
    <property type="evidence" value="ECO:0000314"/>
    <property type="project" value="UniProtKB"/>
</dbReference>
<dbReference type="GO" id="GO:0005739">
    <property type="term" value="C:mitochondrion"/>
    <property type="evidence" value="ECO:0000314"/>
    <property type="project" value="UniProtKB"/>
</dbReference>
<dbReference type="GO" id="GO:0005635">
    <property type="term" value="C:nuclear envelope"/>
    <property type="evidence" value="ECO:0000314"/>
    <property type="project" value="UniProtKB"/>
</dbReference>
<dbReference type="GO" id="GO:0005654">
    <property type="term" value="C:nucleoplasm"/>
    <property type="evidence" value="ECO:0000250"/>
    <property type="project" value="UniProtKB"/>
</dbReference>
<dbReference type="GO" id="GO:0005634">
    <property type="term" value="C:nucleus"/>
    <property type="evidence" value="ECO:0000250"/>
    <property type="project" value="UniProtKB"/>
</dbReference>
<dbReference type="GO" id="GO:0014069">
    <property type="term" value="C:postsynaptic density"/>
    <property type="evidence" value="ECO:0007669"/>
    <property type="project" value="Ensembl"/>
</dbReference>
<dbReference type="GO" id="GO:0140506">
    <property type="term" value="F:endoplasmic reticulum-autophagosome adaptor activity"/>
    <property type="evidence" value="ECO:0000314"/>
    <property type="project" value="FlyBase"/>
</dbReference>
<dbReference type="GO" id="GO:0051020">
    <property type="term" value="F:GTPase binding"/>
    <property type="evidence" value="ECO:0000353"/>
    <property type="project" value="BHF-UCL"/>
</dbReference>
<dbReference type="GO" id="GO:0042802">
    <property type="term" value="F:identical protein binding"/>
    <property type="evidence" value="ECO:0000353"/>
    <property type="project" value="IntAct"/>
</dbReference>
<dbReference type="GO" id="GO:0140580">
    <property type="term" value="F:mitochondrion autophagosome adaptor activity"/>
    <property type="evidence" value="ECO:0000314"/>
    <property type="project" value="FlyBase"/>
</dbReference>
<dbReference type="GO" id="GO:0042803">
    <property type="term" value="F:protein homodimerization activity"/>
    <property type="evidence" value="ECO:0000314"/>
    <property type="project" value="UniProtKB"/>
</dbReference>
<dbReference type="GO" id="GO:0048102">
    <property type="term" value="P:autophagic cell death"/>
    <property type="evidence" value="ECO:0007669"/>
    <property type="project" value="Ensembl"/>
</dbReference>
<dbReference type="GO" id="GO:0000422">
    <property type="term" value="P:autophagy of mitochondrion"/>
    <property type="evidence" value="ECO:0000303"/>
    <property type="project" value="ParkinsonsUK-UCL"/>
</dbReference>
<dbReference type="GO" id="GO:0050873">
    <property type="term" value="P:brown fat cell differentiation"/>
    <property type="evidence" value="ECO:0007669"/>
    <property type="project" value="Ensembl"/>
</dbReference>
<dbReference type="GO" id="GO:0010659">
    <property type="term" value="P:cardiac muscle cell apoptotic process"/>
    <property type="evidence" value="ECO:0007669"/>
    <property type="project" value="Ensembl"/>
</dbReference>
<dbReference type="GO" id="GO:0071279">
    <property type="term" value="P:cellular response to cobalt ion"/>
    <property type="evidence" value="ECO:0000315"/>
    <property type="project" value="BHF-UCL"/>
</dbReference>
<dbReference type="GO" id="GO:0070301">
    <property type="term" value="P:cellular response to hydrogen peroxide"/>
    <property type="evidence" value="ECO:0007669"/>
    <property type="project" value="Ensembl"/>
</dbReference>
<dbReference type="GO" id="GO:0071456">
    <property type="term" value="P:cellular response to hypoxia"/>
    <property type="evidence" value="ECO:0000315"/>
    <property type="project" value="BHF-UCL"/>
</dbReference>
<dbReference type="GO" id="GO:0071260">
    <property type="term" value="P:cellular response to mechanical stimulus"/>
    <property type="evidence" value="ECO:0000270"/>
    <property type="project" value="UniProtKB"/>
</dbReference>
<dbReference type="GO" id="GO:0021987">
    <property type="term" value="P:cerebral cortex development"/>
    <property type="evidence" value="ECO:0007669"/>
    <property type="project" value="Ensembl"/>
</dbReference>
<dbReference type="GO" id="GO:0051607">
    <property type="term" value="P:defense response to virus"/>
    <property type="evidence" value="ECO:0000314"/>
    <property type="project" value="UniProtKB"/>
</dbReference>
<dbReference type="GO" id="GO:0140507">
    <property type="term" value="P:granzyme-mediated programmed cell death signaling pathway"/>
    <property type="evidence" value="ECO:0000314"/>
    <property type="project" value="GO_Central"/>
</dbReference>
<dbReference type="GO" id="GO:1990144">
    <property type="term" value="P:intrinsic apoptotic signaling pathway in response to hypoxia"/>
    <property type="evidence" value="ECO:0000315"/>
    <property type="project" value="BHF-UCL"/>
</dbReference>
<dbReference type="GO" id="GO:0043653">
    <property type="term" value="P:mitochondrial fragmentation involved in apoptotic process"/>
    <property type="evidence" value="ECO:0000314"/>
    <property type="project" value="BHF-UCL"/>
</dbReference>
<dbReference type="GO" id="GO:0097345">
    <property type="term" value="P:mitochondrial outer membrane permeabilization"/>
    <property type="evidence" value="ECO:0000314"/>
    <property type="project" value="UniProtKB"/>
</dbReference>
<dbReference type="GO" id="GO:0035694">
    <property type="term" value="P:mitochondrial protein catabolic process"/>
    <property type="evidence" value="ECO:0000315"/>
    <property type="project" value="UniProtKB"/>
</dbReference>
<dbReference type="GO" id="GO:0000423">
    <property type="term" value="P:mitophagy"/>
    <property type="evidence" value="ECO:0000315"/>
    <property type="project" value="FlyBase"/>
</dbReference>
<dbReference type="GO" id="GO:0043066">
    <property type="term" value="P:negative regulation of apoptotic process"/>
    <property type="evidence" value="ECO:0000304"/>
    <property type="project" value="UniProtKB"/>
</dbReference>
<dbReference type="GO" id="GO:0045837">
    <property type="term" value="P:negative regulation of membrane potential"/>
    <property type="evidence" value="ECO:0000314"/>
    <property type="project" value="UniProtKB"/>
</dbReference>
<dbReference type="GO" id="GO:0010637">
    <property type="term" value="P:negative regulation of mitochondrial fusion"/>
    <property type="evidence" value="ECO:0000314"/>
    <property type="project" value="BHF-UCL"/>
</dbReference>
<dbReference type="GO" id="GO:1902109">
    <property type="term" value="P:negative regulation of mitochondrial membrane permeability involved in apoptotic process"/>
    <property type="evidence" value="ECO:0007669"/>
    <property type="project" value="Ensembl"/>
</dbReference>
<dbReference type="GO" id="GO:0010917">
    <property type="term" value="P:negative regulation of mitochondrial membrane potential"/>
    <property type="evidence" value="ECO:0007669"/>
    <property type="project" value="Ensembl"/>
</dbReference>
<dbReference type="GO" id="GO:0043069">
    <property type="term" value="P:negative regulation of programmed cell death"/>
    <property type="evidence" value="ECO:0000316"/>
    <property type="project" value="MGI"/>
</dbReference>
<dbReference type="GO" id="GO:0051402">
    <property type="term" value="P:neuron apoptotic process"/>
    <property type="evidence" value="ECO:0000250"/>
    <property type="project" value="UniProtKB"/>
</dbReference>
<dbReference type="GO" id="GO:0048709">
    <property type="term" value="P:oligodendrocyte differentiation"/>
    <property type="evidence" value="ECO:0007669"/>
    <property type="project" value="Ensembl"/>
</dbReference>
<dbReference type="GO" id="GO:0043065">
    <property type="term" value="P:positive regulation of apoptotic process"/>
    <property type="evidence" value="ECO:0000314"/>
    <property type="project" value="UniProtKB"/>
</dbReference>
<dbReference type="GO" id="GO:0010508">
    <property type="term" value="P:positive regulation of autophagy"/>
    <property type="evidence" value="ECO:0000304"/>
    <property type="project" value="UniProtKB"/>
</dbReference>
<dbReference type="GO" id="GO:1903599">
    <property type="term" value="P:positive regulation of autophagy of mitochondrion"/>
    <property type="evidence" value="ECO:0007669"/>
    <property type="project" value="Ensembl"/>
</dbReference>
<dbReference type="GO" id="GO:0010666">
    <property type="term" value="P:positive regulation of cardiac muscle cell apoptotic process"/>
    <property type="evidence" value="ECO:0007669"/>
    <property type="project" value="Ensembl"/>
</dbReference>
<dbReference type="GO" id="GO:0016239">
    <property type="term" value="P:positive regulation of macroautophagy"/>
    <property type="evidence" value="ECO:0000316"/>
    <property type="project" value="MGI"/>
</dbReference>
<dbReference type="GO" id="GO:0051561">
    <property type="term" value="P:positive regulation of mitochondrial calcium ion concentration"/>
    <property type="evidence" value="ECO:0007669"/>
    <property type="project" value="Ensembl"/>
</dbReference>
<dbReference type="GO" id="GO:0090141">
    <property type="term" value="P:positive regulation of mitochondrial fission"/>
    <property type="evidence" value="ECO:0000314"/>
    <property type="project" value="BHF-UCL"/>
</dbReference>
<dbReference type="GO" id="GO:0043068">
    <property type="term" value="P:positive regulation of programmed cell death"/>
    <property type="evidence" value="ECO:0000314"/>
    <property type="project" value="UniProtKB"/>
</dbReference>
<dbReference type="GO" id="GO:0043243">
    <property type="term" value="P:positive regulation of protein-containing complex disassembly"/>
    <property type="evidence" value="ECO:0000314"/>
    <property type="project" value="BHF-UCL"/>
</dbReference>
<dbReference type="GO" id="GO:0090200">
    <property type="term" value="P:positive regulation of release of cytochrome c from mitochondria"/>
    <property type="evidence" value="ECO:0000314"/>
    <property type="project" value="BHF-UCL"/>
</dbReference>
<dbReference type="GO" id="GO:0072593">
    <property type="term" value="P:reactive oxygen species metabolic process"/>
    <property type="evidence" value="ECO:0000314"/>
    <property type="project" value="UniProtKB"/>
</dbReference>
<dbReference type="GO" id="GO:0046902">
    <property type="term" value="P:regulation of mitochondrial membrane permeability"/>
    <property type="evidence" value="ECO:0000314"/>
    <property type="project" value="UniProtKB"/>
</dbReference>
<dbReference type="GO" id="GO:0048678">
    <property type="term" value="P:response to axon injury"/>
    <property type="evidence" value="ECO:0007669"/>
    <property type="project" value="Ensembl"/>
</dbReference>
<dbReference type="GO" id="GO:0009617">
    <property type="term" value="P:response to bacterium"/>
    <property type="evidence" value="ECO:0007669"/>
    <property type="project" value="Ensembl"/>
</dbReference>
<dbReference type="GO" id="GO:0055093">
    <property type="term" value="P:response to hyperoxia"/>
    <property type="evidence" value="ECO:0007669"/>
    <property type="project" value="Ensembl"/>
</dbReference>
<dbReference type="GO" id="GO:0001666">
    <property type="term" value="P:response to hypoxia"/>
    <property type="evidence" value="ECO:0000250"/>
    <property type="project" value="UniProtKB"/>
</dbReference>
<dbReference type="GO" id="GO:0090649">
    <property type="term" value="P:response to oxygen-glucose deprivation"/>
    <property type="evidence" value="ECO:0007669"/>
    <property type="project" value="Ensembl"/>
</dbReference>
<dbReference type="GO" id="GO:0061709">
    <property type="term" value="P:reticulophagy"/>
    <property type="evidence" value="ECO:0000315"/>
    <property type="project" value="FlyBase"/>
</dbReference>
<dbReference type="Gene3D" id="6.10.250.1020">
    <property type="match status" value="1"/>
</dbReference>
<dbReference type="InterPro" id="IPR010548">
    <property type="entry name" value="BNIP3"/>
</dbReference>
<dbReference type="PANTHER" id="PTHR15186:SF4">
    <property type="entry name" value="BCL2_ADENOVIRUS E1B 19 KDA PROTEIN-INTERACTING PROTEIN 3"/>
    <property type="match status" value="1"/>
</dbReference>
<dbReference type="PANTHER" id="PTHR15186">
    <property type="entry name" value="RE48077P"/>
    <property type="match status" value="1"/>
</dbReference>
<dbReference type="Pfam" id="PF06553">
    <property type="entry name" value="BNIP3"/>
    <property type="match status" value="1"/>
</dbReference>
<sequence length="194" mass="21541">MSQNGAPGMQEESLQGSWVELHFSNNGNGGSVPASVSIYNGDMEKILLDAQHESGRSSSKSSHCDSPPRSQTPQDTNRASETDTHSIGEKNSSQSEEDDIERRKEVESILKKNSDWIWDWSSRPENIPPKEFLFKHPKRTATLSMRNTSVMKKGGIFSAEFLKVFLPSLLLSHLLAIGLGIYIGRRLTTSTSTF</sequence>
<organism>
    <name type="scientific">Homo sapiens</name>
    <name type="common">Human</name>
    <dbReference type="NCBI Taxonomy" id="9606"/>
    <lineage>
        <taxon>Eukaryota</taxon>
        <taxon>Metazoa</taxon>
        <taxon>Chordata</taxon>
        <taxon>Craniata</taxon>
        <taxon>Vertebrata</taxon>
        <taxon>Euteleostomi</taxon>
        <taxon>Mammalia</taxon>
        <taxon>Eutheria</taxon>
        <taxon>Euarchontoglires</taxon>
        <taxon>Primates</taxon>
        <taxon>Haplorrhini</taxon>
        <taxon>Catarrhini</taxon>
        <taxon>Hominidae</taxon>
        <taxon>Homo</taxon>
    </lineage>
</organism>
<protein>
    <recommendedName>
        <fullName evidence="12">BCL2/adenovirus E1B 19 kDa protein-interacting protein 3</fullName>
    </recommendedName>
</protein>
<reference key="1">
    <citation type="journal article" date="1994" name="Cell">
        <title>Adenovirus E1B 19 kDa and Bcl-2 proteins interact with a common set of cellular proteins.</title>
        <authorList>
            <person name="Boyd J.M."/>
            <person name="Malstrom S."/>
            <person name="Subramanian T."/>
            <person name="Venkatesh L.K."/>
            <person name="Schaeper U."/>
            <person name="Elangovan B."/>
            <person name="D'Sa-Eipper C."/>
            <person name="Chinnadurai G."/>
        </authorList>
    </citation>
    <scope>NUCLEOTIDE SEQUENCE [MRNA]</scope>
    <scope>INTERACTION WITH BCL2</scope>
    <scope>INTERACTION WITH ADENOVIRUS E1B (MICROBIAL INFECTION)</scope>
    <source>
        <tissue>B-cell</tissue>
    </source>
</reference>
<reference key="2">
    <citation type="journal article" date="1997" name="J. Exp. Med.">
        <title>The E1B 19K/Bcl-2-binding protein Nip3 is a dimeric mitochondrial protein that activates apoptosis.</title>
        <authorList>
            <person name="Chen G."/>
            <person name="Ray R."/>
            <person name="Dubik D."/>
            <person name="Shi L."/>
            <person name="Cizeau J."/>
            <person name="Bleackley R.C."/>
            <person name="Saxena S."/>
            <person name="Gietz R.D."/>
            <person name="Greenberg A.H."/>
        </authorList>
    </citation>
    <scope>NUCLEOTIDE SEQUENCE [MRNA]</scope>
    <source>
        <tissue>B-cell</tissue>
    </source>
</reference>
<reference key="3">
    <citation type="submission" date="2005-01" db="EMBL/GenBank/DDBJ databases">
        <authorList>
            <consortium name="NIEHS SNPs program"/>
        </authorList>
    </citation>
    <scope>NUCLEOTIDE SEQUENCE [GENOMIC DNA]</scope>
</reference>
<reference key="4">
    <citation type="journal article" date="2004" name="Nature">
        <title>The DNA sequence and comparative analysis of human chromosome 10.</title>
        <authorList>
            <person name="Deloukas P."/>
            <person name="Earthrowl M.E."/>
            <person name="Grafham D.V."/>
            <person name="Rubenfield M."/>
            <person name="French L."/>
            <person name="Steward C.A."/>
            <person name="Sims S.K."/>
            <person name="Jones M.C."/>
            <person name="Searle S."/>
            <person name="Scott C."/>
            <person name="Howe K."/>
            <person name="Hunt S.E."/>
            <person name="Andrews T.D."/>
            <person name="Gilbert J.G.R."/>
            <person name="Swarbreck D."/>
            <person name="Ashurst J.L."/>
            <person name="Taylor A."/>
            <person name="Battles J."/>
            <person name="Bird C.P."/>
            <person name="Ainscough R."/>
            <person name="Almeida J.P."/>
            <person name="Ashwell R.I.S."/>
            <person name="Ambrose K.D."/>
            <person name="Babbage A.K."/>
            <person name="Bagguley C.L."/>
            <person name="Bailey J."/>
            <person name="Banerjee R."/>
            <person name="Bates K."/>
            <person name="Beasley H."/>
            <person name="Bray-Allen S."/>
            <person name="Brown A.J."/>
            <person name="Brown J.Y."/>
            <person name="Burford D.C."/>
            <person name="Burrill W."/>
            <person name="Burton J."/>
            <person name="Cahill P."/>
            <person name="Camire D."/>
            <person name="Carter N.P."/>
            <person name="Chapman J.C."/>
            <person name="Clark S.Y."/>
            <person name="Clarke G."/>
            <person name="Clee C.M."/>
            <person name="Clegg S."/>
            <person name="Corby N."/>
            <person name="Coulson A."/>
            <person name="Dhami P."/>
            <person name="Dutta I."/>
            <person name="Dunn M."/>
            <person name="Faulkner L."/>
            <person name="Frankish A."/>
            <person name="Frankland J.A."/>
            <person name="Garner P."/>
            <person name="Garnett J."/>
            <person name="Gribble S."/>
            <person name="Griffiths C."/>
            <person name="Grocock R."/>
            <person name="Gustafson E."/>
            <person name="Hammond S."/>
            <person name="Harley J.L."/>
            <person name="Hart E."/>
            <person name="Heath P.D."/>
            <person name="Ho T.P."/>
            <person name="Hopkins B."/>
            <person name="Horne J."/>
            <person name="Howden P.J."/>
            <person name="Huckle E."/>
            <person name="Hynds C."/>
            <person name="Johnson C."/>
            <person name="Johnson D."/>
            <person name="Kana A."/>
            <person name="Kay M."/>
            <person name="Kimberley A.M."/>
            <person name="Kershaw J.K."/>
            <person name="Kokkinaki M."/>
            <person name="Laird G.K."/>
            <person name="Lawlor S."/>
            <person name="Lee H.M."/>
            <person name="Leongamornlert D.A."/>
            <person name="Laird G."/>
            <person name="Lloyd C."/>
            <person name="Lloyd D.M."/>
            <person name="Loveland J."/>
            <person name="Lovell J."/>
            <person name="McLaren S."/>
            <person name="McLay K.E."/>
            <person name="McMurray A."/>
            <person name="Mashreghi-Mohammadi M."/>
            <person name="Matthews L."/>
            <person name="Milne S."/>
            <person name="Nickerson T."/>
            <person name="Nguyen M."/>
            <person name="Overton-Larty E."/>
            <person name="Palmer S.A."/>
            <person name="Pearce A.V."/>
            <person name="Peck A.I."/>
            <person name="Pelan S."/>
            <person name="Phillimore B."/>
            <person name="Porter K."/>
            <person name="Rice C.M."/>
            <person name="Rogosin A."/>
            <person name="Ross M.T."/>
            <person name="Sarafidou T."/>
            <person name="Sehra H.K."/>
            <person name="Shownkeen R."/>
            <person name="Skuce C.D."/>
            <person name="Smith M."/>
            <person name="Standring L."/>
            <person name="Sycamore N."/>
            <person name="Tester J."/>
            <person name="Thorpe A."/>
            <person name="Torcasso W."/>
            <person name="Tracey A."/>
            <person name="Tromans A."/>
            <person name="Tsolas J."/>
            <person name="Wall M."/>
            <person name="Walsh J."/>
            <person name="Wang H."/>
            <person name="Weinstock K."/>
            <person name="West A.P."/>
            <person name="Willey D.L."/>
            <person name="Whitehead S.L."/>
            <person name="Wilming L."/>
            <person name="Wray P.W."/>
            <person name="Young L."/>
            <person name="Chen Y."/>
            <person name="Lovering R.C."/>
            <person name="Moschonas N.K."/>
            <person name="Siebert R."/>
            <person name="Fechtel K."/>
            <person name="Bentley D."/>
            <person name="Durbin R.M."/>
            <person name="Hubbard T."/>
            <person name="Doucette-Stamm L."/>
            <person name="Beck S."/>
            <person name="Smith D.R."/>
            <person name="Rogers J."/>
        </authorList>
    </citation>
    <scope>NUCLEOTIDE SEQUENCE [LARGE SCALE GENOMIC DNA]</scope>
</reference>
<reference key="5">
    <citation type="journal article" date="2004" name="Genome Res.">
        <title>The status, quality, and expansion of the NIH full-length cDNA project: the Mammalian Gene Collection (MGC).</title>
        <authorList>
            <consortium name="The MGC Project Team"/>
        </authorList>
    </citation>
    <scope>NUCLEOTIDE SEQUENCE [LARGE SCALE MRNA]</scope>
    <source>
        <tissue>Brain</tissue>
    </source>
</reference>
<reference key="6">
    <citation type="journal article" date="1998" name="J. Biol. Chem.">
        <title>Adenovirus E1B-19K/BCL-2 interacting protein BNIP3 contains a BH3 domain and a mitochondrial targeting sequence.</title>
        <authorList>
            <person name="Yasuda M."/>
            <person name="Theodorakis P."/>
            <person name="Subramanian T."/>
            <person name="Chinnadurai G."/>
        </authorList>
    </citation>
    <scope>INTERACTION WITH EPSTEIN-BARR VIRUS PROTEIN BHRF1 (MICROBIAL INFECTION)</scope>
</reference>
<reference key="7">
    <citation type="journal article" date="1999" name="Cell Death Differ.">
        <title>A novel adenovirus E1B19K-binding protein B5 inhibits apoptosis induced by Nip3 by forming a heterodimer through the C-terminal hydrophobic region.</title>
        <authorList>
            <person name="Ohi N."/>
            <person name="Tokunaga A."/>
            <person name="Tsunoda H."/>
            <person name="Nakano K."/>
            <person name="Haraguchi K."/>
            <person name="Oda K."/>
            <person name="Motoyama N."/>
            <person name="Nakajima T."/>
        </authorList>
    </citation>
    <scope>INTERACTION WITH BNIP3L</scope>
</reference>
<reference key="8">
    <citation type="journal article" date="2005" name="Cell. Mol. Life Sci.">
        <title>Membrane translocation and oligomerization of hBok are triggered in response to apoptotic stimuli and Bnip3.</title>
        <authorList>
            <person name="Gao S."/>
            <person name="Fu W."/>
            <person name="Duerrenberger M."/>
            <person name="De Geyter C."/>
            <person name="Zhang H."/>
        </authorList>
    </citation>
    <scope>INTERACTION WITH BOK</scope>
</reference>
<reference key="9">
    <citation type="journal article" date="2008" name="Biochim. Biophys. Acta">
        <title>Acetyl-Coenzyme A acyltransferase 2 attenuates the apoptotic effects of BNIP3 in two human cell lines.</title>
        <authorList>
            <person name="Cao W."/>
            <person name="Liu N."/>
            <person name="Tang S."/>
            <person name="Bao L."/>
            <person name="Shen L."/>
            <person name="Yuan H."/>
            <person name="Zhao X."/>
            <person name="Lu H."/>
        </authorList>
    </citation>
    <scope>SUBCELLULAR LOCATION</scope>
    <scope>INTERACTION WITH ACAA2</scope>
</reference>
<reference key="10">
    <citation type="journal article" date="2008" name="Proc. Natl. Acad. Sci. U.S.A.">
        <title>A quantitative atlas of mitotic phosphorylation.</title>
        <authorList>
            <person name="Dephoure N."/>
            <person name="Zhou C."/>
            <person name="Villen J."/>
            <person name="Beausoleil S.A."/>
            <person name="Bakalarski C.E."/>
            <person name="Elledge S.J."/>
            <person name="Gygi S.P."/>
        </authorList>
    </citation>
    <scope>IDENTIFICATION BY MASS SPECTROMETRY [LARGE SCALE ANALYSIS]</scope>
    <source>
        <tissue>Cervix carcinoma</tissue>
    </source>
</reference>
<reference key="11">
    <citation type="journal article" date="2010" name="Cell Res.">
        <title>S100A8/A9 induces autophagy and apoptosis via ROS-mediated cross-talk between mitochondria and lysosomes that involves BNIP3.</title>
        <authorList>
            <person name="Ghavami S."/>
            <person name="Eshragi M."/>
            <person name="Ande S.R."/>
            <person name="Chazin W.J."/>
            <person name="Klonisch T."/>
            <person name="Halayko A.J."/>
            <person name="McNeill K.D."/>
            <person name="Hashemi M."/>
            <person name="Kerkhoff C."/>
            <person name="Los M."/>
        </authorList>
    </citation>
    <scope>FUNCTION</scope>
    <scope>SUBCELLULAR LOCATION</scope>
</reference>
<reference key="12">
    <citation type="journal article" date="2010" name="Sci. Signal.">
        <title>Quantitative phosphoproteomics reveals widespread full phosphorylation site occupancy during mitosis.</title>
        <authorList>
            <person name="Olsen J.V."/>
            <person name="Vermeulen M."/>
            <person name="Santamaria A."/>
            <person name="Kumar C."/>
            <person name="Miller M.L."/>
            <person name="Jensen L.J."/>
            <person name="Gnad F."/>
            <person name="Cox J."/>
            <person name="Jensen T.S."/>
            <person name="Nigg E.A."/>
            <person name="Brunak S."/>
            <person name="Mann M."/>
        </authorList>
    </citation>
    <scope>PHOSPHORYLATION [LARGE SCALE ANALYSIS] AT SER-86</scope>
    <scope>IDENTIFICATION BY MASS SPECTROMETRY [LARGE SCALE ANALYSIS]</scope>
    <source>
        <tissue>Cervix carcinoma</tissue>
    </source>
</reference>
<reference key="13">
    <citation type="journal article" date="2011" name="BMC Syst. Biol.">
        <title>Initial characterization of the human central proteome.</title>
        <authorList>
            <person name="Burkard T.R."/>
            <person name="Planyavsky M."/>
            <person name="Kaupe I."/>
            <person name="Breitwieser F.P."/>
            <person name="Buerckstuemmer T."/>
            <person name="Bennett K.L."/>
            <person name="Superti-Furga G."/>
            <person name="Colinge J."/>
        </authorList>
    </citation>
    <scope>IDENTIFICATION BY MASS SPECTROMETRY [LARGE SCALE ANALYSIS]</scope>
</reference>
<reference key="14">
    <citation type="journal article" date="2012" name="PLoS ONE">
        <title>BNIP3 and NIX mediate Mieap-induced accumulation of lysosomal proteins within mitochondria.</title>
        <authorList>
            <person name="Nakamura Y."/>
            <person name="Kitamura N."/>
            <person name="Shinogi D."/>
            <person name="Yoshida M."/>
            <person name="Goda O."/>
            <person name="Murai R."/>
            <person name="Kamino H."/>
            <person name="Arakawa H."/>
        </authorList>
    </citation>
    <scope>FUNCTION</scope>
    <scope>INTERACTION WITH SPATA18</scope>
    <scope>SUBCELLULAR LOCATION</scope>
</reference>
<reference key="15">
    <citation type="journal article" date="2014" name="J. Proteomics">
        <title>An enzyme assisted RP-RPLC approach for in-depth analysis of human liver phosphoproteome.</title>
        <authorList>
            <person name="Bian Y."/>
            <person name="Song C."/>
            <person name="Cheng K."/>
            <person name="Dong M."/>
            <person name="Wang F."/>
            <person name="Huang J."/>
            <person name="Sun D."/>
            <person name="Wang L."/>
            <person name="Ye M."/>
            <person name="Zou H."/>
        </authorList>
    </citation>
    <scope>PHOSPHORYLATION [LARGE SCALE ANALYSIS] AT SER-54; SER-66 AND SER-95</scope>
    <scope>IDENTIFICATION BY MASS SPECTROMETRY [LARGE SCALE ANALYSIS]</scope>
    <source>
        <tissue>Liver</tissue>
    </source>
</reference>
<reference key="16">
    <citation type="journal article" date="2024" name="EMBO Rep.">
        <title>PPTC7 antagonizes mitophagy by promoting BNIP3 and NIX degradation via SCFFBXL4.</title>
        <authorList>
            <person name="Nguyen-Dien G.T."/>
            <person name="Townsend B."/>
            <person name="Kulkarni P.G."/>
            <person name="Kozul K.L."/>
            <person name="Ooi S.S."/>
            <person name="Eldershaw D.N."/>
            <person name="Weeratunga S."/>
            <person name="Liu M."/>
            <person name="Jones M.J."/>
            <person name="Millard S.S."/>
            <person name="Ng D.C."/>
            <person name="Pagano M."/>
            <person name="Bonfim-Melo A."/>
            <person name="Schneider T."/>
            <person name="Komander D."/>
            <person name="Lazarou M."/>
            <person name="Collins B.M."/>
            <person name="Pagan J.K."/>
        </authorList>
    </citation>
    <scope>INTERACTION WITH PPTC7</scope>
</reference>
<keyword id="KW-0002">3D-structure</keyword>
<keyword id="KW-0053">Apoptosis</keyword>
<keyword id="KW-0945">Host-virus interaction</keyword>
<keyword id="KW-0472">Membrane</keyword>
<keyword id="KW-0496">Mitochondrion</keyword>
<keyword id="KW-1000">Mitochondrion outer membrane</keyword>
<keyword id="KW-0597">Phosphoprotein</keyword>
<keyword id="KW-1267">Proteomics identification</keyword>
<keyword id="KW-1185">Reference proteome</keyword>
<keyword id="KW-0812">Transmembrane</keyword>
<keyword id="KW-1133">Transmembrane helix</keyword>
<accession>Q12983</accession>
<accession>O14620</accession>
<accession>Q96GP0</accession>
<name>BNIP3_HUMAN</name>
<proteinExistence type="evidence at protein level"/>
<comment type="function">
    <text evidence="7 8">Apoptosis-inducing protein that can overcome BCL2 suppression. May play a role in repartitioning calcium between the two major intracellular calcium stores in association with BCL2. Involved in mitochondrial quality control via its interaction with SPATA18/MIEAP: in response to mitochondrial damage, participates in mitochondrial protein catabolic process (also named MALM) leading to the degradation of damaged proteins inside mitochondria. The physical interaction of SPATA18/MIEAP, BNIP3 and BNIP3L/NIX at the mitochondrial outer membrane regulates the opening of a pore in the mitochondrial double membrane in order to mediate the translocation of lysosomal proteins from the cytoplasm to the mitochondrial matrix. Plays an important role in the calprotectin (S100A8/A9)-induced cell death pathway.</text>
</comment>
<comment type="subunit">
    <text evidence="4 5 6 8 9 10">Homodimer. Binds to BCL2. Interacts with BNIP3L and ACAA2. Interacts (via BH3 domain) with SPATA18 (via coiled-coil domains). Interacts with BOK; promotes BOK oligomerization (PubMed:15868100). Interacts with PPTC7; this interaction promotes BNIP3 degradation (PubMed:38992176).</text>
</comment>
<comment type="subunit">
    <text evidence="10">(Microbial infection) Interacts with adenovirus E1B 19 kDa protein.</text>
</comment>
<comment type="subunit">
    <text evidence="11">(Microbial infection) Interacts with Epstein-Barr virus BHRF1.</text>
</comment>
<comment type="interaction">
    <interactant intactId="EBI-749464">
        <id>Q12983</id>
    </interactant>
    <interactant intactId="EBI-19125216">
        <id>Q86WK6</id>
        <label>AMIGO1</label>
    </interactant>
    <organismsDiffer>false</organismsDiffer>
    <experiments>3</experiments>
</comment>
<comment type="interaction">
    <interactant intactId="EBI-749464">
        <id>Q12983</id>
    </interactant>
    <interactant intactId="EBI-11343438">
        <id>Q3SXY8</id>
        <label>ARL13B</label>
    </interactant>
    <organismsDiffer>false</organismsDiffer>
    <experiments>3</experiments>
</comment>
<comment type="interaction">
    <interactant intactId="EBI-749464">
        <id>Q12983</id>
    </interactant>
    <interactant intactId="EBI-700794">
        <id>Q13323</id>
        <label>BIK</label>
    </interactant>
    <organismsDiffer>false</organismsDiffer>
    <experiments>3</experiments>
</comment>
<comment type="interaction">
    <interactant intactId="EBI-749464">
        <id>Q12983</id>
    </interactant>
    <interactant intactId="EBI-752094">
        <id>Q12982</id>
        <label>BNIP2</label>
    </interactant>
    <organismsDiffer>false</organismsDiffer>
    <experiments>3</experiments>
</comment>
<comment type="interaction">
    <interactant intactId="EBI-749464">
        <id>Q12983</id>
    </interactant>
    <interactant intactId="EBI-749464">
        <id>Q12983</id>
        <label>BNIP3</label>
    </interactant>
    <organismsDiffer>false</organismsDiffer>
    <experiments>8</experiments>
</comment>
<comment type="interaction">
    <interactant intactId="EBI-749464">
        <id>Q12983</id>
    </interactant>
    <interactant intactId="EBI-849893">
        <id>O60238</id>
        <label>BNIP3L</label>
    </interactant>
    <organismsDiffer>false</organismsDiffer>
    <experiments>24</experiments>
</comment>
<comment type="interaction">
    <interactant intactId="EBI-749464">
        <id>Q12983</id>
    </interactant>
    <interactant intactId="EBI-1211297">
        <id>P07766</id>
        <label>CD3E</label>
    </interactant>
    <organismsDiffer>false</organismsDiffer>
    <experiments>3</experiments>
</comment>
<comment type="interaction">
    <interactant intactId="EBI-749464">
        <id>Q12983</id>
    </interactant>
    <interactant intactId="EBI-18341636">
        <id>O95484</id>
        <label>CLDN9</label>
    </interactant>
    <organismsDiffer>false</organismsDiffer>
    <experiments>3</experiments>
</comment>
<comment type="interaction">
    <interactant intactId="EBI-749464">
        <id>Q12983</id>
    </interactant>
    <interactant intactId="EBI-3939278">
        <id>Q9BXN2</id>
        <label>CLEC7A</label>
    </interactant>
    <organismsDiffer>false</organismsDiffer>
    <experiments>3</experiments>
</comment>
<comment type="interaction">
    <interactant intactId="EBI-749464">
        <id>Q12983</id>
    </interactant>
    <interactant intactId="EBI-11989440">
        <id>Q9BXN2-6</id>
        <label>CLEC7A</label>
    </interactant>
    <organismsDiffer>false</organismsDiffer>
    <experiments>3</experiments>
</comment>
<comment type="interaction">
    <interactant intactId="EBI-749464">
        <id>Q12983</id>
    </interactant>
    <interactant intactId="EBI-11522780">
        <id>Q96DZ9-2</id>
        <label>CMTM5</label>
    </interactant>
    <organismsDiffer>false</organismsDiffer>
    <experiments>3</experiments>
</comment>
<comment type="interaction">
    <interactant intactId="EBI-749464">
        <id>Q12983</id>
    </interactant>
    <interactant intactId="EBI-6942903">
        <id>Q96BA8</id>
        <label>CREB3L1</label>
    </interactant>
    <organismsDiffer>false</organismsDiffer>
    <experiments>3</experiments>
</comment>
<comment type="interaction">
    <interactant intactId="EBI-749464">
        <id>Q12983</id>
    </interactant>
    <interactant intactId="EBI-8787095">
        <id>O00559</id>
        <label>EBAG9</label>
    </interactant>
    <organismsDiffer>false</organismsDiffer>
    <experiments>3</experiments>
</comment>
<comment type="interaction">
    <interactant intactId="EBI-749464">
        <id>Q12983</id>
    </interactant>
    <interactant intactId="EBI-3915253">
        <id>Q15125</id>
        <label>EBP</label>
    </interactant>
    <organismsDiffer>false</organismsDiffer>
    <experiments>3</experiments>
</comment>
<comment type="interaction">
    <interactant intactId="EBI-749464">
        <id>Q12983</id>
    </interactant>
    <interactant intactId="EBI-18535450">
        <id>Q9GZR5</id>
        <label>ELOVL4</label>
    </interactant>
    <organismsDiffer>false</organismsDiffer>
    <experiments>3</experiments>
</comment>
<comment type="interaction">
    <interactant intactId="EBI-749464">
        <id>Q12983</id>
    </interactant>
    <interactant intactId="EBI-781551">
        <id>Q9Y282</id>
        <label>ERGIC3</label>
    </interactant>
    <organismsDiffer>false</organismsDiffer>
    <experiments>3</experiments>
</comment>
<comment type="interaction">
    <interactant intactId="EBI-749464">
        <id>Q12983</id>
    </interactant>
    <interactant intactId="EBI-18304435">
        <id>Q5JX71</id>
        <label>FAM209A</label>
    </interactant>
    <organismsDiffer>false</organismsDiffer>
    <experiments>3</experiments>
</comment>
<comment type="interaction">
    <interactant intactId="EBI-749464">
        <id>Q12983</id>
    </interactant>
    <interactant intactId="EBI-12118888">
        <id>Q96D05-2</id>
        <label>FAM241B</label>
    </interactant>
    <organismsDiffer>false</organismsDiffer>
    <experiments>3</experiments>
</comment>
<comment type="interaction">
    <interactant intactId="EBI-749464">
        <id>Q12983</id>
    </interactant>
    <interactant intactId="EBI-2876774">
        <id>Q92520</id>
        <label>FAM3C</label>
    </interactant>
    <organismsDiffer>false</organismsDiffer>
    <experiments>3</experiments>
</comment>
<comment type="interaction">
    <interactant intactId="EBI-749464">
        <id>Q12983</id>
    </interactant>
    <interactant intactId="EBI-743099">
        <id>Q969F0</id>
        <label>FATE1</label>
    </interactant>
    <organismsDiffer>false</organismsDiffer>
    <experiments>6</experiments>
</comment>
<comment type="interaction">
    <interactant intactId="EBI-749464">
        <id>Q12983</id>
    </interactant>
    <interactant intactId="EBI-2833872">
        <id>O15552</id>
        <label>FFAR2</label>
    </interactant>
    <organismsDiffer>false</organismsDiffer>
    <experiments>3</experiments>
</comment>
<comment type="interaction">
    <interactant intactId="EBI-749464">
        <id>Q12983</id>
    </interactant>
    <interactant intactId="EBI-13345167">
        <id>Q8TDT2</id>
        <label>GPR152</label>
    </interactant>
    <organismsDiffer>false</organismsDiffer>
    <experiments>3</experiments>
</comment>
<comment type="interaction">
    <interactant intactId="EBI-749464">
        <id>Q12983</id>
    </interactant>
    <interactant intactId="EBI-18076404">
        <id>O15529</id>
        <label>GPR42</label>
    </interactant>
    <organismsDiffer>false</organismsDiffer>
    <experiments>3</experiments>
</comment>
<comment type="interaction">
    <interactant intactId="EBI-749464">
        <id>Q12983</id>
    </interactant>
    <interactant intactId="EBI-12816745">
        <id>P05981</id>
        <label>HPN</label>
    </interactant>
    <organismsDiffer>false</organismsDiffer>
    <experiments>3</experiments>
</comment>
<comment type="interaction">
    <interactant intactId="EBI-749464">
        <id>Q12983</id>
    </interactant>
    <interactant intactId="EBI-3905457">
        <id>P38484</id>
        <label>IFNGR2</label>
    </interactant>
    <organismsDiffer>false</organismsDiffer>
    <experiments>3</experiments>
</comment>
<comment type="interaction">
    <interactant intactId="EBI-749464">
        <id>Q12983</id>
    </interactant>
    <interactant intactId="EBI-10266796">
        <id>Q8N5M9</id>
        <label>JAGN1</label>
    </interactant>
    <organismsDiffer>false</organismsDiffer>
    <experiments>3</experiments>
</comment>
<comment type="interaction">
    <interactant intactId="EBI-749464">
        <id>Q12983</id>
    </interactant>
    <interactant intactId="EBI-359761">
        <id>Q86UP2</id>
        <label>KTN1</label>
    </interactant>
    <organismsDiffer>false</organismsDiffer>
    <experiments>3</experiments>
</comment>
<comment type="interaction">
    <interactant intactId="EBI-749464">
        <id>Q12983</id>
    </interactant>
    <interactant intactId="EBI-12007212">
        <id>Q86UP2-3</id>
        <label>KTN1</label>
    </interactant>
    <organismsDiffer>false</organismsDiffer>
    <experiments>3</experiments>
</comment>
<comment type="interaction">
    <interactant intactId="EBI-749464">
        <id>Q12983</id>
    </interactant>
    <interactant intactId="EBI-10173166">
        <id>Q5T700</id>
        <label>LDLRAD1</label>
    </interactant>
    <organismsDiffer>false</organismsDiffer>
    <experiments>6</experiments>
</comment>
<comment type="interaction">
    <interactant intactId="EBI-749464">
        <id>Q12983</id>
    </interactant>
    <interactant intactId="EBI-750078">
        <id>Q13021</id>
        <label>MALL</label>
    </interactant>
    <organismsDiffer>false</organismsDiffer>
    <experiments>3</experiments>
</comment>
<comment type="interaction">
    <interactant intactId="EBI-749464">
        <id>Q12983</id>
    </interactant>
    <interactant intactId="EBI-373355">
        <id>Q5SR56</id>
        <label>MFSD14B</label>
    </interactant>
    <organismsDiffer>false</organismsDiffer>
    <experiments>3</experiments>
</comment>
<comment type="interaction">
    <interactant intactId="EBI-749464">
        <id>Q12983</id>
    </interactant>
    <interactant intactId="EBI-12806656">
        <id>Q96HJ5</id>
        <label>MS4A3</label>
    </interactant>
    <organismsDiffer>false</organismsDiffer>
    <experiments>3</experiments>
</comment>
<comment type="interaction">
    <interactant intactId="EBI-749464">
        <id>Q12983</id>
    </interactant>
    <interactant intactId="EBI-1054131">
        <id>O60313</id>
        <label>OPA1</label>
    </interactant>
    <organismsDiffer>false</organismsDiffer>
    <experiments>10</experiments>
</comment>
<comment type="interaction">
    <interactant intactId="EBI-749464">
        <id>Q12983</id>
    </interactant>
    <interactant intactId="EBI-608347">
        <id>Q04941</id>
        <label>PLP2</label>
    </interactant>
    <organismsDiffer>false</organismsDiffer>
    <experiments>3</experiments>
</comment>
<comment type="interaction">
    <interactant intactId="EBI-749464">
        <id>Q12983</id>
    </interactant>
    <interactant intactId="EBI-9089276">
        <id>Q8NI37</id>
        <label>PPTC7</label>
    </interactant>
    <organismsDiffer>false</organismsDiffer>
    <experiments>10</experiments>
</comment>
<comment type="interaction">
    <interactant intactId="EBI-749464">
        <id>Q12983</id>
    </interactant>
    <interactant intactId="EBI-11337973">
        <id>Q9BRK0</id>
        <label>REEP2</label>
    </interactant>
    <organismsDiffer>false</organismsDiffer>
    <experiments>3</experiments>
</comment>
<comment type="interaction">
    <interactant intactId="EBI-749464">
        <id>Q12983</id>
    </interactant>
    <interactant intactId="EBI-18397230">
        <id>Q6P5S7</id>
        <label>RNASEK</label>
    </interactant>
    <organismsDiffer>false</organismsDiffer>
    <experiments>3</experiments>
</comment>
<comment type="interaction">
    <interactant intactId="EBI-749464">
        <id>Q12983</id>
    </interactant>
    <interactant intactId="EBI-13044680">
        <id>Q9Y225-2</id>
        <label>RNF24</label>
    </interactant>
    <organismsDiffer>false</organismsDiffer>
    <experiments>3</experiments>
</comment>
<comment type="interaction">
    <interactant intactId="EBI-749464">
        <id>Q12983</id>
    </interactant>
    <interactant intactId="EBI-1052363">
        <id>Q9NS64</id>
        <label>RPRM</label>
    </interactant>
    <organismsDiffer>false</organismsDiffer>
    <experiments>3</experiments>
</comment>
<comment type="interaction">
    <interactant intactId="EBI-749464">
        <id>Q12983</id>
    </interactant>
    <interactant intactId="EBI-17247926">
        <id>Q9NY72</id>
        <label>SCN3B</label>
    </interactant>
    <organismsDiffer>false</organismsDiffer>
    <experiments>3</experiments>
</comment>
<comment type="interaction">
    <interactant intactId="EBI-749464">
        <id>Q12983</id>
    </interactant>
    <interactant intactId="EBI-8652744">
        <id>Q96IW7</id>
        <label>SEC22A</label>
    </interactant>
    <organismsDiffer>false</organismsDiffer>
    <experiments>3</experiments>
</comment>
<comment type="interaction">
    <interactant intactId="EBI-749464">
        <id>Q12983</id>
    </interactant>
    <interactant intactId="EBI-81088">
        <id>Q15436</id>
        <label>SEC23A</label>
    </interactant>
    <organismsDiffer>false</organismsDiffer>
    <experiments>3</experiments>
</comment>
<comment type="interaction">
    <interactant intactId="EBI-749464">
        <id>Q12983</id>
    </interactant>
    <interactant intactId="EBI-17867220">
        <id>O15432</id>
        <label>SLC31A2</label>
    </interactant>
    <organismsDiffer>false</organismsDiffer>
    <experiments>3</experiments>
</comment>
<comment type="interaction">
    <interactant intactId="EBI-749464">
        <id>Q12983</id>
    </interactant>
    <interactant intactId="EBI-12147661">
        <id>P78383</id>
        <label>SLC35B1</label>
    </interactant>
    <organismsDiffer>false</organismsDiffer>
    <experiments>3</experiments>
</comment>
<comment type="interaction">
    <interactant intactId="EBI-749464">
        <id>Q12983</id>
    </interactant>
    <interactant intactId="EBI-18396863">
        <id>Q9H1V8</id>
        <label>SLC6A17</label>
    </interactant>
    <organismsDiffer>false</organismsDiffer>
    <experiments>3</experiments>
</comment>
<comment type="interaction">
    <interactant intactId="EBI-749464">
        <id>Q12983</id>
    </interactant>
    <interactant intactId="EBI-741850">
        <id>Q9BZL3</id>
        <label>SMIM3</label>
    </interactant>
    <organismsDiffer>false</organismsDiffer>
    <experiments>3</experiments>
</comment>
<comment type="interaction">
    <interactant intactId="EBI-749464">
        <id>Q12983</id>
    </interactant>
    <interactant intactId="EBI-17498703">
        <id>Q9HBV2</id>
        <label>SPACA1</label>
    </interactant>
    <organismsDiffer>false</organismsDiffer>
    <experiments>3</experiments>
</comment>
<comment type="interaction">
    <interactant intactId="EBI-749464">
        <id>Q12983</id>
    </interactant>
    <interactant intactId="EBI-12947623">
        <id>Q96MV1</id>
        <label>TLCD4</label>
    </interactant>
    <organismsDiffer>false</organismsDiffer>
    <experiments>3</experiments>
</comment>
<comment type="interaction">
    <interactant intactId="EBI-749464">
        <id>Q12983</id>
    </interactant>
    <interactant intactId="EBI-13351685">
        <id>Q96CE8</id>
        <label>TM4SF18</label>
    </interactant>
    <organismsDiffer>false</organismsDiffer>
    <experiments>3</experiments>
</comment>
<comment type="interaction">
    <interactant intactId="EBI-749464">
        <id>Q12983</id>
    </interactant>
    <interactant intactId="EBI-3922699">
        <id>Q96IK0</id>
        <label>TMEM101</label>
    </interactant>
    <organismsDiffer>false</organismsDiffer>
    <experiments>3</experiments>
</comment>
<comment type="interaction">
    <interactant intactId="EBI-749464">
        <id>Q12983</id>
    </interactant>
    <interactant intactId="EBI-2821497">
        <id>Q9BVX2</id>
        <label>TMEM106C</label>
    </interactant>
    <organismsDiffer>false</organismsDiffer>
    <experiments>3</experiments>
</comment>
<comment type="interaction">
    <interactant intactId="EBI-749464">
        <id>Q12983</id>
    </interactant>
    <interactant intactId="EBI-723946">
        <id>P17152</id>
        <label>TMEM11</label>
    </interactant>
    <organismsDiffer>false</organismsDiffer>
    <experiments>12</experiments>
</comment>
<comment type="interaction">
    <interactant intactId="EBI-749464">
        <id>Q12983</id>
    </interactant>
    <interactant intactId="EBI-6269551">
        <id>Q6UW68</id>
        <label>TMEM205</label>
    </interactant>
    <organismsDiffer>false</organismsDiffer>
    <experiments>3</experiments>
</comment>
<comment type="interaction">
    <interactant intactId="EBI-749464">
        <id>Q12983</id>
    </interactant>
    <interactant intactId="EBI-12345267">
        <id>O15393-2</id>
        <label>TMPRSS2</label>
    </interactant>
    <organismsDiffer>false</organismsDiffer>
    <experiments>3</experiments>
</comment>
<comment type="interaction">
    <interactant intactId="EBI-749464">
        <id>Q12983</id>
    </interactant>
    <interactant intactId="EBI-6447886">
        <id>Q9Y320</id>
        <label>TMX2</label>
    </interactant>
    <organismsDiffer>false</organismsDiffer>
    <experiments>3</experiments>
</comment>
<comment type="interaction">
    <interactant intactId="EBI-749464">
        <id>Q12983</id>
    </interactant>
    <interactant intactId="EBI-12003398">
        <id>Q9H2S6-2</id>
        <label>TNMD</label>
    </interactant>
    <organismsDiffer>false</organismsDiffer>
    <experiments>3</experiments>
</comment>
<comment type="interaction">
    <interactant intactId="EBI-749464">
        <id>Q12983</id>
    </interactant>
    <interactant intactId="EBI-12837904">
        <id>Q96MV8</id>
        <label>ZDHHC15</label>
    </interactant>
    <organismsDiffer>false</organismsDiffer>
    <experiments>3</experiments>
</comment>
<comment type="interaction">
    <interactant intactId="EBI-749464">
        <id>Q12983</id>
    </interactant>
    <interactant intactId="EBI-15625247">
        <id>Q5ZSD5</id>
        <label>sidF</label>
    </interactant>
    <organismsDiffer>true</organismsDiffer>
    <experiments>3</experiments>
</comment>
<comment type="subcellular location">
    <subcellularLocation>
        <location>Mitochondrion</location>
    </subcellularLocation>
    <subcellularLocation>
        <location>Mitochondrion outer membrane</location>
        <topology>Single-pass membrane protein</topology>
    </subcellularLocation>
    <text>Coexpression with the EIB 19-kDa protein results in a shift in NIP3 localization pattern to the nuclear envelope. Colocalizes with ACAA2 in the mitochondria. Colocalizes with SPATA18 at the mitochondrion outer membrane.</text>
</comment>
<comment type="similarity">
    <text evidence="12">Belongs to the NIP3 family.</text>
</comment>
<comment type="online information" name="Atlas of Genetics and Cytogenetics in Oncology and Haematology">
    <link uri="https://atlasgeneticsoncology.org/gene/822/BNIP3"/>
</comment>